<gene>
    <name type="ORF">Y48B6A.1</name>
</gene>
<accession>Q9U2A9</accession>
<keyword id="KW-0539">Nucleus</keyword>
<keyword id="KW-1185">Reference proteome</keyword>
<keyword id="KW-0677">Repeat</keyword>
<keyword id="KW-0690">Ribosome biogenesis</keyword>
<keyword id="KW-0698">rRNA processing</keyword>
<keyword id="KW-0853">WD repeat</keyword>
<protein>
    <recommendedName>
        <fullName evidence="1">Ribosome biogenesis protein BOP1 homolog</fullName>
    </recommendedName>
</protein>
<name>BOP1_CAEEL</name>
<dbReference type="EMBL" id="AL110490">
    <property type="protein sequence ID" value="CAB54439.1"/>
    <property type="molecule type" value="Genomic_DNA"/>
</dbReference>
<dbReference type="PIR" id="T26995">
    <property type="entry name" value="T26995"/>
</dbReference>
<dbReference type="RefSeq" id="NP_496956.1">
    <property type="nucleotide sequence ID" value="NM_064555.5"/>
</dbReference>
<dbReference type="SMR" id="Q9U2A9"/>
<dbReference type="BioGRID" id="40351">
    <property type="interactions" value="25"/>
</dbReference>
<dbReference type="FunCoup" id="Q9U2A9">
    <property type="interactions" value="2295"/>
</dbReference>
<dbReference type="STRING" id="6239.Y48B6A.1.1"/>
<dbReference type="PaxDb" id="6239-Y48B6A.1"/>
<dbReference type="PeptideAtlas" id="Q9U2A9"/>
<dbReference type="EnsemblMetazoa" id="Y48B6A.1.1">
    <property type="protein sequence ID" value="Y48B6A.1.1"/>
    <property type="gene ID" value="WBGene00012978"/>
</dbReference>
<dbReference type="GeneID" id="175069"/>
<dbReference type="KEGG" id="cel:CELE_Y48B6A.1"/>
<dbReference type="UCSC" id="Y48B6A.1">
    <property type="organism name" value="c. elegans"/>
</dbReference>
<dbReference type="AGR" id="WB:WBGene00012978"/>
<dbReference type="CTD" id="175069"/>
<dbReference type="WormBase" id="Y48B6A.1">
    <property type="protein sequence ID" value="CE22116"/>
    <property type="gene ID" value="WBGene00012978"/>
</dbReference>
<dbReference type="eggNOG" id="KOG0650">
    <property type="taxonomic scope" value="Eukaryota"/>
</dbReference>
<dbReference type="GeneTree" id="ENSGT00390000018422"/>
<dbReference type="HOGENOM" id="CLU_011390_2_0_1"/>
<dbReference type="InParanoid" id="Q9U2A9"/>
<dbReference type="OMA" id="MRPAKGE"/>
<dbReference type="OrthoDB" id="5571054at2759"/>
<dbReference type="PhylomeDB" id="Q9U2A9"/>
<dbReference type="Reactome" id="R-CEL-6791226">
    <property type="pathway name" value="Major pathway of rRNA processing in the nucleolus and cytosol"/>
</dbReference>
<dbReference type="PRO" id="PR:Q9U2A9"/>
<dbReference type="Proteomes" id="UP000001940">
    <property type="component" value="Chromosome II"/>
</dbReference>
<dbReference type="Bgee" id="WBGene00012978">
    <property type="expression patterns" value="Expressed in germ line (C elegans) and 4 other cell types or tissues"/>
</dbReference>
<dbReference type="GO" id="GO:0005654">
    <property type="term" value="C:nucleoplasm"/>
    <property type="evidence" value="ECO:0007669"/>
    <property type="project" value="UniProtKB-SubCell"/>
</dbReference>
<dbReference type="GO" id="GO:0070545">
    <property type="term" value="C:PeBoW complex"/>
    <property type="evidence" value="ECO:0000318"/>
    <property type="project" value="GO_Central"/>
</dbReference>
<dbReference type="GO" id="GO:0030687">
    <property type="term" value="C:preribosome, large subunit precursor"/>
    <property type="evidence" value="ECO:0000318"/>
    <property type="project" value="GO_Central"/>
</dbReference>
<dbReference type="GO" id="GO:0043021">
    <property type="term" value="F:ribonucleoprotein complex binding"/>
    <property type="evidence" value="ECO:0000318"/>
    <property type="project" value="GO_Central"/>
</dbReference>
<dbReference type="GO" id="GO:0000466">
    <property type="term" value="P:maturation of 5.8S rRNA from tricistronic rRNA transcript (SSU-rRNA, 5.8S rRNA, LSU-rRNA)"/>
    <property type="evidence" value="ECO:0007669"/>
    <property type="project" value="UniProtKB-UniRule"/>
</dbReference>
<dbReference type="GO" id="GO:0000463">
    <property type="term" value="P:maturation of LSU-rRNA from tricistronic rRNA transcript (SSU-rRNA, 5.8S rRNA, LSU-rRNA)"/>
    <property type="evidence" value="ECO:0000318"/>
    <property type="project" value="GO_Central"/>
</dbReference>
<dbReference type="FunFam" id="2.130.10.10:FF:001327">
    <property type="entry name" value="Ribosome biogenesis protein BOP1 homolog"/>
    <property type="match status" value="1"/>
</dbReference>
<dbReference type="Gene3D" id="2.130.10.10">
    <property type="entry name" value="YVTN repeat-like/Quinoprotein amine dehydrogenase"/>
    <property type="match status" value="1"/>
</dbReference>
<dbReference type="HAMAP" id="MF_03027">
    <property type="entry name" value="BOP1"/>
    <property type="match status" value="1"/>
</dbReference>
<dbReference type="InterPro" id="IPR028598">
    <property type="entry name" value="BOP1/Erb1"/>
</dbReference>
<dbReference type="InterPro" id="IPR012953">
    <property type="entry name" value="BOP1_N_dom"/>
</dbReference>
<dbReference type="InterPro" id="IPR015943">
    <property type="entry name" value="WD40/YVTN_repeat-like_dom_sf"/>
</dbReference>
<dbReference type="InterPro" id="IPR036322">
    <property type="entry name" value="WD40_repeat_dom_sf"/>
</dbReference>
<dbReference type="InterPro" id="IPR001680">
    <property type="entry name" value="WD40_rpt"/>
</dbReference>
<dbReference type="PANTHER" id="PTHR17605:SF0">
    <property type="entry name" value="RIBOSOME BIOGENESIS PROTEIN BOP1"/>
    <property type="match status" value="1"/>
</dbReference>
<dbReference type="PANTHER" id="PTHR17605">
    <property type="entry name" value="RIBOSOME BIOGENESIS PROTEIN BOP1 BLOCK OF PROLIFERATION 1 PROTEIN"/>
    <property type="match status" value="1"/>
</dbReference>
<dbReference type="Pfam" id="PF08145">
    <property type="entry name" value="BOP1NT"/>
    <property type="match status" value="1"/>
</dbReference>
<dbReference type="Pfam" id="PF00400">
    <property type="entry name" value="WD40"/>
    <property type="match status" value="3"/>
</dbReference>
<dbReference type="SMART" id="SM01035">
    <property type="entry name" value="BOP1NT"/>
    <property type="match status" value="1"/>
</dbReference>
<dbReference type="SMART" id="SM00320">
    <property type="entry name" value="WD40"/>
    <property type="match status" value="6"/>
</dbReference>
<dbReference type="SUPFAM" id="SSF50978">
    <property type="entry name" value="WD40 repeat-like"/>
    <property type="match status" value="1"/>
</dbReference>
<dbReference type="PROSITE" id="PS50082">
    <property type="entry name" value="WD_REPEATS_2"/>
    <property type="match status" value="2"/>
</dbReference>
<dbReference type="PROSITE" id="PS50294">
    <property type="entry name" value="WD_REPEATS_REGION"/>
    <property type="match status" value="1"/>
</dbReference>
<reference key="1">
    <citation type="journal article" date="1998" name="Science">
        <title>Genome sequence of the nematode C. elegans: a platform for investigating biology.</title>
        <authorList>
            <consortium name="The C. elegans sequencing consortium"/>
        </authorList>
    </citation>
    <scope>NUCLEOTIDE SEQUENCE [LARGE SCALE GENOMIC DNA]</scope>
    <source>
        <strain>Bristol N2</strain>
    </source>
</reference>
<organism>
    <name type="scientific">Caenorhabditis elegans</name>
    <dbReference type="NCBI Taxonomy" id="6239"/>
    <lineage>
        <taxon>Eukaryota</taxon>
        <taxon>Metazoa</taxon>
        <taxon>Ecdysozoa</taxon>
        <taxon>Nematoda</taxon>
        <taxon>Chromadorea</taxon>
        <taxon>Rhabditida</taxon>
        <taxon>Rhabditina</taxon>
        <taxon>Rhabditomorpha</taxon>
        <taxon>Rhabditoidea</taxon>
        <taxon>Rhabditidae</taxon>
        <taxon>Peloderinae</taxon>
        <taxon>Caenorhabditis</taxon>
    </lineage>
</organism>
<evidence type="ECO:0000255" key="1">
    <source>
        <dbReference type="HAMAP-Rule" id="MF_03027"/>
    </source>
</evidence>
<evidence type="ECO:0000256" key="2">
    <source>
        <dbReference type="SAM" id="MobiDB-lite"/>
    </source>
</evidence>
<proteinExistence type="inferred from homology"/>
<comment type="function">
    <text evidence="1">Required for maturation of ribosomal RNAs and formation of the large ribosomal subunit.</text>
</comment>
<comment type="subcellular location">
    <subcellularLocation>
        <location evidence="1">Nucleus</location>
        <location evidence="1">Nucleolus</location>
    </subcellularLocation>
    <subcellularLocation>
        <location evidence="1">Nucleus</location>
        <location evidence="1">Nucleoplasm</location>
    </subcellularLocation>
</comment>
<comment type="similarity">
    <text evidence="1">Belongs to the WD repeat BOP1/ERB1 family.</text>
</comment>
<sequence length="674" mass="77381">MASTSAATPLKNKRKFENGKKKPKTLKDEFGEKLDIKPVIVPPKPADEYDYDSSDEEDLRNTIGNIPIKWYDDEDHIGYDKFGEKIAKPAKKGEIETFLEKMEDPDYWRKVFDKQTGTDVKLTDEQIEKIHNIATGKYPTIGYNPYEPFLDIFSSQKEIHPIDNRPEPKSRFIPSKDEMRMVSRMVHAIKMGWAKGPRAKKEEHKSYDLWASEDALDNVTKSQLSRMRVHMPAPKVALPTHAESYNPPEEYIFDDEERKKWEEAEKEDRVLNFMPSKYDALRKVPQYDKFITERFERCLDLYLAPRQRKMRIHADPTDLLPDLPNPNDLRPFPTTLAFYMRGHTGQVRAITVEPERGELLASGGEDGTVRIWMIATGRCIKTFQMDGEVTSVSFSPVADRTLLAVAYEGKYVAILNTGCGDRLHVQQTEALLAETPTDAQEDGAVVTWRKSKEKLMLKMPNEVRQVTWHSKGDYFASVAIDDIAKSVYVHQLSKAKSQCPFQKRKGHVQAVTFHPTQARLFVATKIHVREYDLARCVLVKKLITGCKHISTMATDANGENLFLGGLDRRFCWMDLQMGNKPWKKLKHHTAAVRSVAYHKKYPLLATVSDDGTAMVYYARIYTDFVKDNELYPVKRLRAHEKTPNDLCMLHTTWHPTQPWLITAGADGTIALFTY</sequence>
<feature type="chain" id="PRO_0000370407" description="Ribosome biogenesis protein BOP1 homolog">
    <location>
        <begin position="1"/>
        <end position="674"/>
    </location>
</feature>
<feature type="repeat" description="WD 1">
    <location>
        <begin position="342"/>
        <end position="384"/>
    </location>
</feature>
<feature type="repeat" description="WD 2">
    <location>
        <begin position="386"/>
        <end position="425"/>
    </location>
</feature>
<feature type="repeat" description="WD 3">
    <location>
        <begin position="427"/>
        <end position="458"/>
    </location>
</feature>
<feature type="repeat" description="WD 4">
    <location>
        <begin position="459"/>
        <end position="500"/>
    </location>
</feature>
<feature type="repeat" description="WD 5">
    <location>
        <begin position="503"/>
        <end position="541"/>
    </location>
</feature>
<feature type="repeat" description="WD 6">
    <location>
        <begin position="587"/>
        <end position="626"/>
    </location>
</feature>
<feature type="repeat" description="WD 7">
    <location>
        <begin position="643"/>
        <end position="674"/>
    </location>
</feature>
<feature type="region of interest" description="Disordered" evidence="2">
    <location>
        <begin position="1"/>
        <end position="28"/>
    </location>
</feature>
<feature type="compositionally biased region" description="Basic and acidic residues" evidence="2">
    <location>
        <begin position="15"/>
        <end position="28"/>
    </location>
</feature>